<comment type="function">
    <text evidence="1 3">3-methylglutaconyl-CoA hydratase that catalyzes the fifth step in the leucine degradation pathway, the reversible hydration of 3-methylglutaconyl-CoA (3-MG-CoA) to 3-hydroxy-3-methylglutaryl-CoA (HMG-CoA) (By similarity). Involved in vegetative growth, conidiation and in the stress response (PubMed:32431008). Controls mitochondrial morphology and mitophagy, which are critical for the infectious growth of the pathogen (PubMed:32431008).</text>
</comment>
<comment type="catalytic activity">
    <reaction evidence="6">
        <text>(3S)-3-hydroxy-3-methylglutaryl-CoA = 3-methyl-(2E)-glutaconyl-CoA + H2O</text>
        <dbReference type="Rhea" id="RHEA:21536"/>
        <dbReference type="ChEBI" id="CHEBI:15377"/>
        <dbReference type="ChEBI" id="CHEBI:43074"/>
        <dbReference type="ChEBI" id="CHEBI:57346"/>
        <dbReference type="EC" id="4.2.1.18"/>
    </reaction>
</comment>
<comment type="pathway">
    <text evidence="6">Amino-acid degradation; L-leucine degradation; (S)-3-hydroxy-3-methylglutaryl-CoA from 3-isovaleryl-CoA: step 3/3.</text>
</comment>
<comment type="subunit">
    <text evidence="1">Homohexamer.</text>
</comment>
<comment type="subcellular location">
    <subcellularLocation>
        <location evidence="3">Mitochondrion</location>
    </subcellularLocation>
</comment>
<comment type="disruption phenotype">
    <text evidence="3">Exhibits a reduction in growth rate and an increase in the number of conidia (PubMed:32431008). Reduces virulence in host rice plants (PubMed:32431008). Increases tolerance to NaCl, KCl and sorbitol but decreases tolerance to SDS, calcofluor-white and H(2)O(2) (PubMed:32431008).</text>
</comment>
<comment type="similarity">
    <text evidence="5">Belongs to the enoyl-CoA hydratase/isomerase family.</text>
</comment>
<sequence length="349" mass="37506">MPPVSRILSYAPRVAIRPSSQLARPARAFAVGTVRYYSAEQPEEPLIRVTDLPAPNSGHIRVLELNRPKARNAISRALLASLREEVHSIARQYDAQTGEEIPTPSWNKRFGGIAGDSEKGPTRALVLASAVESSFCAGADLKERRGFTQEETNEFLANLRSTFAALDALPIPTISAISSRALGGGLELALCTHFRVLTSNAIVSLPETRLGIIPGAGGTHRLPRLIGLGRARDMIVTGRAVSGAEAYFLGLADRLVEVLPPDEQEAADTTDKDAALLSAAREAALTEAVRLASQICEGGPIGIRAALQAVQAPSQETENKMYERVIGTEDRNEALKAFAEKRKPVFKGR</sequence>
<protein>
    <recommendedName>
        <fullName evidence="4">Methylglutaconyl-CoA hydratase 1, mitochondrial</fullName>
        <ecNumber evidence="6">4.2.1.18</ecNumber>
    </recommendedName>
</protein>
<evidence type="ECO:0000250" key="1">
    <source>
        <dbReference type="UniProtKB" id="Q13825"/>
    </source>
</evidence>
<evidence type="ECO:0000255" key="2"/>
<evidence type="ECO:0000269" key="3">
    <source>
    </source>
</evidence>
<evidence type="ECO:0000303" key="4">
    <source>
    </source>
</evidence>
<evidence type="ECO:0000305" key="5"/>
<evidence type="ECO:0000305" key="6">
    <source>
    </source>
</evidence>
<gene>
    <name evidence="4" type="primary">AUH1</name>
    <name type="ORF">MGG_03335</name>
</gene>
<organism>
    <name type="scientific">Pyricularia oryzae (strain 70-15 / ATCC MYA-4617 / FGSC 8958)</name>
    <name type="common">Rice blast fungus</name>
    <name type="synonym">Magnaporthe oryzae</name>
    <dbReference type="NCBI Taxonomy" id="242507"/>
    <lineage>
        <taxon>Eukaryota</taxon>
        <taxon>Fungi</taxon>
        <taxon>Dikarya</taxon>
        <taxon>Ascomycota</taxon>
        <taxon>Pezizomycotina</taxon>
        <taxon>Sordariomycetes</taxon>
        <taxon>Sordariomycetidae</taxon>
        <taxon>Magnaporthales</taxon>
        <taxon>Pyriculariaceae</taxon>
        <taxon>Pyricularia</taxon>
    </lineage>
</organism>
<feature type="transit peptide" description="Mitochondrion" evidence="2">
    <location>
        <begin position="1"/>
        <end position="37"/>
    </location>
</feature>
<feature type="chain" id="PRO_0000462291" description="Methylglutaconyl-CoA hydratase 1, mitochondrial">
    <location>
        <begin position="38"/>
        <end position="349"/>
    </location>
</feature>
<keyword id="KW-0101">Branched-chain amino acid catabolism</keyword>
<keyword id="KW-0456">Lyase</keyword>
<keyword id="KW-0496">Mitochondrion</keyword>
<keyword id="KW-1185">Reference proteome</keyword>
<keyword id="KW-0809">Transit peptide</keyword>
<keyword id="KW-0843">Virulence</keyword>
<reference key="1">
    <citation type="journal article" date="2005" name="Nature">
        <title>The genome sequence of the rice blast fungus Magnaporthe grisea.</title>
        <authorList>
            <person name="Dean R.A."/>
            <person name="Talbot N.J."/>
            <person name="Ebbole D.J."/>
            <person name="Farman M.L."/>
            <person name="Mitchell T.K."/>
            <person name="Orbach M.J."/>
            <person name="Thon M.R."/>
            <person name="Kulkarni R."/>
            <person name="Xu J.-R."/>
            <person name="Pan H."/>
            <person name="Read N.D."/>
            <person name="Lee Y.-H."/>
            <person name="Carbone I."/>
            <person name="Brown D."/>
            <person name="Oh Y.Y."/>
            <person name="Donofrio N."/>
            <person name="Jeong J.S."/>
            <person name="Soanes D.M."/>
            <person name="Djonovic S."/>
            <person name="Kolomiets E."/>
            <person name="Rehmeyer C."/>
            <person name="Li W."/>
            <person name="Harding M."/>
            <person name="Kim S."/>
            <person name="Lebrun M.-H."/>
            <person name="Bohnert H."/>
            <person name="Coughlan S."/>
            <person name="Butler J."/>
            <person name="Calvo S.E."/>
            <person name="Ma L.-J."/>
            <person name="Nicol R."/>
            <person name="Purcell S."/>
            <person name="Nusbaum C."/>
            <person name="Galagan J.E."/>
            <person name="Birren B.W."/>
        </authorList>
    </citation>
    <scope>NUCLEOTIDE SEQUENCE [LARGE SCALE GENOMIC DNA]</scope>
    <source>
        <strain>70-15 / ATCC MYA-4617 / FGSC 8958</strain>
    </source>
</reference>
<reference key="2">
    <citation type="journal article" date="2021" name="Environ. Microbiol.">
        <title>Transcription factor MoMsn2 targets the putative 3-methylglutaconyl-CoA hydratase-encoding gene MoAUH1 to govern infectious growth via mitochondrial fusion/fission balance in Magnaporthe oryzae.</title>
        <authorList>
            <person name="Xiao Y."/>
            <person name="Liu L."/>
            <person name="Zhang T."/>
            <person name="Zhou R."/>
            <person name="Ren Y."/>
            <person name="Li X."/>
            <person name="Shu H."/>
            <person name="Ye W."/>
            <person name="Zheng X."/>
            <person name="Zhang Z."/>
            <person name="Zhang H."/>
        </authorList>
    </citation>
    <scope>FUNCTION</scope>
    <scope>DISRUPTION PHENOTYPE</scope>
    <scope>SUBCELLULAR LOCATION</scope>
</reference>
<dbReference type="EC" id="4.2.1.18" evidence="6"/>
<dbReference type="EMBL" id="CM001234">
    <property type="protein sequence ID" value="EHA50298.1"/>
    <property type="molecule type" value="Genomic_DNA"/>
</dbReference>
<dbReference type="RefSeq" id="XP_003716617.1">
    <property type="nucleotide sequence ID" value="XM_003716569.1"/>
</dbReference>
<dbReference type="SMR" id="G4N954"/>
<dbReference type="STRING" id="242507.G4N954"/>
<dbReference type="EnsemblFungi" id="MGG_03335T0">
    <property type="protein sequence ID" value="MGG_03335T0"/>
    <property type="gene ID" value="MGG_03335"/>
</dbReference>
<dbReference type="GeneID" id="2676886"/>
<dbReference type="KEGG" id="mgr:MGG_03335"/>
<dbReference type="VEuPathDB" id="FungiDB:MGG_03335"/>
<dbReference type="eggNOG" id="KOG1679">
    <property type="taxonomic scope" value="Eukaryota"/>
</dbReference>
<dbReference type="HOGENOM" id="CLU_009834_7_6_1"/>
<dbReference type="InParanoid" id="G4N954"/>
<dbReference type="OMA" id="YEQAHAW"/>
<dbReference type="OrthoDB" id="410701at2759"/>
<dbReference type="UniPathway" id="UPA00363">
    <property type="reaction ID" value="UER00862"/>
</dbReference>
<dbReference type="Proteomes" id="UP000009058">
    <property type="component" value="Chromosome 4"/>
</dbReference>
<dbReference type="GO" id="GO:0005739">
    <property type="term" value="C:mitochondrion"/>
    <property type="evidence" value="ECO:0007669"/>
    <property type="project" value="TreeGrafter"/>
</dbReference>
<dbReference type="GO" id="GO:0016829">
    <property type="term" value="F:lyase activity"/>
    <property type="evidence" value="ECO:0007669"/>
    <property type="project" value="UniProtKB-KW"/>
</dbReference>
<dbReference type="GO" id="GO:0006635">
    <property type="term" value="P:fatty acid beta-oxidation"/>
    <property type="evidence" value="ECO:0007669"/>
    <property type="project" value="TreeGrafter"/>
</dbReference>
<dbReference type="CDD" id="cd06558">
    <property type="entry name" value="crotonase-like"/>
    <property type="match status" value="1"/>
</dbReference>
<dbReference type="FunFam" id="3.90.226.10:FF:000058">
    <property type="entry name" value="Enoyl-CoA hydratase/isomerase family protein"/>
    <property type="match status" value="1"/>
</dbReference>
<dbReference type="Gene3D" id="3.90.226.10">
    <property type="entry name" value="2-enoyl-CoA Hydratase, Chain A, domain 1"/>
    <property type="match status" value="1"/>
</dbReference>
<dbReference type="Gene3D" id="1.10.12.10">
    <property type="entry name" value="Lyase 2-enoyl-coa Hydratase, Chain A, domain 2"/>
    <property type="match status" value="1"/>
</dbReference>
<dbReference type="InterPro" id="IPR029045">
    <property type="entry name" value="ClpP/crotonase-like_dom_sf"/>
</dbReference>
<dbReference type="InterPro" id="IPR001753">
    <property type="entry name" value="Enoyl-CoA_hydra/iso"/>
</dbReference>
<dbReference type="InterPro" id="IPR014748">
    <property type="entry name" value="Enoyl-CoA_hydra_C"/>
</dbReference>
<dbReference type="PANTHER" id="PTHR11941">
    <property type="entry name" value="ENOYL-COA HYDRATASE-RELATED"/>
    <property type="match status" value="1"/>
</dbReference>
<dbReference type="PANTHER" id="PTHR11941:SF171">
    <property type="entry name" value="SD19268P"/>
    <property type="match status" value="1"/>
</dbReference>
<dbReference type="Pfam" id="PF00378">
    <property type="entry name" value="ECH_1"/>
    <property type="match status" value="1"/>
</dbReference>
<dbReference type="SUPFAM" id="SSF52096">
    <property type="entry name" value="ClpP/crotonase"/>
    <property type="match status" value="1"/>
</dbReference>
<proteinExistence type="inferred from homology"/>
<accession>G4N954</accession>
<name>AUH1_PYRO7</name>